<accession>Q3Z8C6</accession>
<protein>
    <recommendedName>
        <fullName evidence="1">Adenine deaminase</fullName>
        <shortName evidence="1">Adenase</shortName>
        <shortName evidence="1">Adenine aminase</shortName>
        <ecNumber evidence="1">3.5.4.2</ecNumber>
    </recommendedName>
</protein>
<reference key="1">
    <citation type="journal article" date="2005" name="Science">
        <title>Genome sequence of the PCE-dechlorinating bacterium Dehalococcoides ethenogenes.</title>
        <authorList>
            <person name="Seshadri R."/>
            <person name="Adrian L."/>
            <person name="Fouts D.E."/>
            <person name="Eisen J.A."/>
            <person name="Phillippy A.M."/>
            <person name="Methe B.A."/>
            <person name="Ward N.L."/>
            <person name="Nelson W.C."/>
            <person name="DeBoy R.T."/>
            <person name="Khouri H.M."/>
            <person name="Kolonay J.F."/>
            <person name="Dodson R.J."/>
            <person name="Daugherty S.C."/>
            <person name="Brinkac L.M."/>
            <person name="Sullivan S.A."/>
            <person name="Madupu R."/>
            <person name="Nelson K.E."/>
            <person name="Kang K.H."/>
            <person name="Impraim M."/>
            <person name="Tran K."/>
            <person name="Robinson J.M."/>
            <person name="Forberger H.A."/>
            <person name="Fraser C.M."/>
            <person name="Zinder S.H."/>
            <person name="Heidelberg J.F."/>
        </authorList>
    </citation>
    <scope>NUCLEOTIDE SEQUENCE [LARGE SCALE GENOMIC DNA]</scope>
    <source>
        <strain>ATCC BAA-2266 / KCTC 15142 / 195</strain>
    </source>
</reference>
<feature type="chain" id="PRO_0000142414" description="Adenine deaminase">
    <location>
        <begin position="1"/>
        <end position="571"/>
    </location>
</feature>
<comment type="catalytic activity">
    <reaction evidence="1">
        <text>adenine + H2O + H(+) = hypoxanthine + NH4(+)</text>
        <dbReference type="Rhea" id="RHEA:23688"/>
        <dbReference type="ChEBI" id="CHEBI:15377"/>
        <dbReference type="ChEBI" id="CHEBI:15378"/>
        <dbReference type="ChEBI" id="CHEBI:16708"/>
        <dbReference type="ChEBI" id="CHEBI:17368"/>
        <dbReference type="ChEBI" id="CHEBI:28938"/>
        <dbReference type="EC" id="3.5.4.2"/>
    </reaction>
</comment>
<comment type="cofactor">
    <cofactor evidence="1">
        <name>Mn(2+)</name>
        <dbReference type="ChEBI" id="CHEBI:29035"/>
    </cofactor>
</comment>
<comment type="similarity">
    <text evidence="1">Belongs to the metallo-dependent hydrolases superfamily. Adenine deaminase family.</text>
</comment>
<dbReference type="EC" id="3.5.4.2" evidence="1"/>
<dbReference type="EMBL" id="CP000027">
    <property type="protein sequence ID" value="AAW39904.1"/>
    <property type="molecule type" value="Genomic_DNA"/>
</dbReference>
<dbReference type="RefSeq" id="WP_010936524.1">
    <property type="nucleotide sequence ID" value="NC_002936.3"/>
</dbReference>
<dbReference type="SMR" id="Q3Z8C6"/>
<dbReference type="FunCoup" id="Q3Z8C6">
    <property type="interactions" value="56"/>
</dbReference>
<dbReference type="STRING" id="243164.DET0791"/>
<dbReference type="GeneID" id="3229866"/>
<dbReference type="KEGG" id="det:DET0791"/>
<dbReference type="PATRIC" id="fig|243164.10.peg.755"/>
<dbReference type="eggNOG" id="COG1001">
    <property type="taxonomic scope" value="Bacteria"/>
</dbReference>
<dbReference type="HOGENOM" id="CLU_027935_0_0_0"/>
<dbReference type="InParanoid" id="Q3Z8C6"/>
<dbReference type="Proteomes" id="UP000008289">
    <property type="component" value="Chromosome"/>
</dbReference>
<dbReference type="GO" id="GO:0000034">
    <property type="term" value="F:adenine deaminase activity"/>
    <property type="evidence" value="ECO:0007669"/>
    <property type="project" value="UniProtKB-UniRule"/>
</dbReference>
<dbReference type="GO" id="GO:0006146">
    <property type="term" value="P:adenine catabolic process"/>
    <property type="evidence" value="ECO:0007669"/>
    <property type="project" value="InterPro"/>
</dbReference>
<dbReference type="CDD" id="cd01295">
    <property type="entry name" value="AdeC"/>
    <property type="match status" value="1"/>
</dbReference>
<dbReference type="Gene3D" id="3.20.20.140">
    <property type="entry name" value="Metal-dependent hydrolases"/>
    <property type="match status" value="1"/>
</dbReference>
<dbReference type="Gene3D" id="2.30.40.10">
    <property type="entry name" value="Urease, subunit C, domain 1"/>
    <property type="match status" value="1"/>
</dbReference>
<dbReference type="HAMAP" id="MF_01518">
    <property type="entry name" value="Adenine_deamin"/>
    <property type="match status" value="1"/>
</dbReference>
<dbReference type="InterPro" id="IPR006679">
    <property type="entry name" value="Adenine_deam"/>
</dbReference>
<dbReference type="InterPro" id="IPR026912">
    <property type="entry name" value="Adenine_deam_C"/>
</dbReference>
<dbReference type="InterPro" id="IPR006680">
    <property type="entry name" value="Amidohydro-rel"/>
</dbReference>
<dbReference type="InterPro" id="IPR011059">
    <property type="entry name" value="Metal-dep_hydrolase_composite"/>
</dbReference>
<dbReference type="InterPro" id="IPR032466">
    <property type="entry name" value="Metal_Hydrolase"/>
</dbReference>
<dbReference type="NCBIfam" id="TIGR01178">
    <property type="entry name" value="ade"/>
    <property type="match status" value="1"/>
</dbReference>
<dbReference type="PANTHER" id="PTHR11113:SF2">
    <property type="entry name" value="ADENINE DEAMINASE"/>
    <property type="match status" value="1"/>
</dbReference>
<dbReference type="PANTHER" id="PTHR11113">
    <property type="entry name" value="N-ACETYLGLUCOSAMINE-6-PHOSPHATE DEACETYLASE"/>
    <property type="match status" value="1"/>
</dbReference>
<dbReference type="Pfam" id="PF13382">
    <property type="entry name" value="Adenine_deam_C"/>
    <property type="match status" value="1"/>
</dbReference>
<dbReference type="Pfam" id="PF01979">
    <property type="entry name" value="Amidohydro_1"/>
    <property type="match status" value="1"/>
</dbReference>
<dbReference type="SUPFAM" id="SSF51338">
    <property type="entry name" value="Composite domain of metallo-dependent hydrolases"/>
    <property type="match status" value="1"/>
</dbReference>
<dbReference type="SUPFAM" id="SSF51556">
    <property type="entry name" value="Metallo-dependent hydrolases"/>
    <property type="match status" value="1"/>
</dbReference>
<organism>
    <name type="scientific">Dehalococcoides mccartyi (strain ATCC BAA-2266 / KCTC 15142 / 195)</name>
    <name type="common">Dehalococcoides ethenogenes (strain 195)</name>
    <dbReference type="NCBI Taxonomy" id="243164"/>
    <lineage>
        <taxon>Bacteria</taxon>
        <taxon>Bacillati</taxon>
        <taxon>Chloroflexota</taxon>
        <taxon>Dehalococcoidia</taxon>
        <taxon>Dehalococcoidales</taxon>
        <taxon>Dehalococcoidaceae</taxon>
        <taxon>Dehalococcoides</taxon>
    </lineage>
</organism>
<keyword id="KW-0378">Hydrolase</keyword>
<keyword id="KW-0464">Manganese</keyword>
<proteinExistence type="inferred from homology"/>
<gene>
    <name evidence="1" type="primary">ade</name>
    <name type="ordered locus">DET0791</name>
</gene>
<evidence type="ECO:0000255" key="1">
    <source>
        <dbReference type="HAMAP-Rule" id="MF_01518"/>
    </source>
</evidence>
<name>ADEC_DEHM1</name>
<sequence>MQTNLSQLIKVARGEAKADLVLLNARVVNVFNAEIEPANVAVFGGQIAGVGDYTLGNRVLDLKGAYLLPGLINGHTHVESSMLDISQYARAVIAHGTSALITDLHEISNVCGKEGIDYVLSASADLPLNIFLQVPSCVPATHLETAGAEINSNDVTELLRLPNVTGLGEMMNFPGVLFGIPSVLDKIEAASGKVLDGHAPGLSGKDLNAYISAGIHSDHECIQLDEAKEKLARGMYIMIREGSSEKNLTELLPLVTDKTYKRCIFVVDDRSCADLQRDGDIDAVVRKAIKLGLDPVRAIQLASINTAEYFRLNGHGAIAPGYLANMIVCQDLNQLDIDMVFHKGELVAEKGQVLFKPQSHVPKSLLSSMHIKPFDIKDLAIKGSSTQMPVIEVIPGQIVTRRLNLKIPAENGVLTPDIEQDLLKIVVLERHCQSGNIGRGLIKGFGLKKGAIASSVAHDSHNVIAVGTNDADIYTAVKELERINGGIALVVDGKISASVPLPVAGLLSTQPLEKVVDALEEINKQAAGLGCKLSAPFATLSFMALPVIPELRLTDLGLVDVNAFKLIPQET</sequence>